<gene>
    <name evidence="1" type="primary">Coq6</name>
</gene>
<evidence type="ECO:0000255" key="1">
    <source>
        <dbReference type="HAMAP-Rule" id="MF_03193"/>
    </source>
</evidence>
<evidence type="ECO:0000269" key="2">
    <source>
    </source>
</evidence>
<evidence type="ECO:0000305" key="3"/>
<evidence type="ECO:0007744" key="4">
    <source>
    </source>
</evidence>
<accession>Q8R1S0</accession>
<accession>Q3TJM2</accession>
<accession>Q80V13</accession>
<accession>Q8BJY5</accession>
<dbReference type="EC" id="1.14.15.45" evidence="1"/>
<dbReference type="EC" id="1.14.15.46" evidence="1"/>
<dbReference type="EMBL" id="AK077863">
    <property type="protein sequence ID" value="BAC37039.1"/>
    <property type="molecule type" value="mRNA"/>
</dbReference>
<dbReference type="EMBL" id="AK131889">
    <property type="protein sequence ID" value="BAE20853.1"/>
    <property type="molecule type" value="mRNA"/>
</dbReference>
<dbReference type="EMBL" id="AK167380">
    <property type="protein sequence ID" value="BAE39473.1"/>
    <property type="molecule type" value="mRNA"/>
</dbReference>
<dbReference type="EMBL" id="AC120402">
    <property type="status" value="NOT_ANNOTATED_CDS"/>
    <property type="molecule type" value="Genomic_DNA"/>
</dbReference>
<dbReference type="EMBL" id="CH466590">
    <property type="protein sequence ID" value="EDL02790.1"/>
    <property type="molecule type" value="Genomic_DNA"/>
</dbReference>
<dbReference type="EMBL" id="BC024135">
    <property type="protein sequence ID" value="AAH24135.1"/>
    <property type="molecule type" value="mRNA"/>
</dbReference>
<dbReference type="EMBL" id="BC051055">
    <property type="protein sequence ID" value="AAH51055.1"/>
    <property type="molecule type" value="mRNA"/>
</dbReference>
<dbReference type="EMBL" id="BC132168">
    <property type="protein sequence ID" value="AAI32169.1"/>
    <property type="molecule type" value="mRNA"/>
</dbReference>
<dbReference type="EMBL" id="BC132170">
    <property type="protein sequence ID" value="AAI32171.1"/>
    <property type="molecule type" value="mRNA"/>
</dbReference>
<dbReference type="CCDS" id="CCDS26044.1"/>
<dbReference type="RefSeq" id="NP_766170.2">
    <property type="nucleotide sequence ID" value="NM_172582.3"/>
</dbReference>
<dbReference type="RefSeq" id="XP_006515762.1">
    <property type="nucleotide sequence ID" value="XM_006515699.2"/>
</dbReference>
<dbReference type="SMR" id="Q8R1S0"/>
<dbReference type="BioGRID" id="229950">
    <property type="interactions" value="5"/>
</dbReference>
<dbReference type="ComplexPortal" id="CPX-3662">
    <property type="entry name" value="CoQ biosynthetic complex"/>
</dbReference>
<dbReference type="FunCoup" id="Q8R1S0">
    <property type="interactions" value="1435"/>
</dbReference>
<dbReference type="STRING" id="10090.ENSMUSP00000105905"/>
<dbReference type="GlyGen" id="Q8R1S0">
    <property type="glycosylation" value="1 site, 1 O-linked glycan (1 site)"/>
</dbReference>
<dbReference type="iPTMnet" id="Q8R1S0"/>
<dbReference type="PhosphoSitePlus" id="Q8R1S0"/>
<dbReference type="jPOST" id="Q8R1S0"/>
<dbReference type="PaxDb" id="10090-ENSMUSP00000105905"/>
<dbReference type="PeptideAtlas" id="Q8R1S0"/>
<dbReference type="ProteomicsDB" id="284090"/>
<dbReference type="Pumba" id="Q8R1S0"/>
<dbReference type="Antibodypedia" id="47346">
    <property type="antibodies" value="190 antibodies from 23 providers"/>
</dbReference>
<dbReference type="DNASU" id="217707"/>
<dbReference type="Ensembl" id="ENSMUST00000021661.13">
    <property type="protein sequence ID" value="ENSMUSP00000021661.7"/>
    <property type="gene ID" value="ENSMUSG00000021235.14"/>
</dbReference>
<dbReference type="Ensembl" id="ENSMUST00000110276.8">
    <property type="protein sequence ID" value="ENSMUSP00000105905.2"/>
    <property type="gene ID" value="ENSMUSG00000021235.14"/>
</dbReference>
<dbReference type="GeneID" id="217707"/>
<dbReference type="KEGG" id="mmu:217707"/>
<dbReference type="UCSC" id="uc007ofb.2">
    <property type="organism name" value="mouse"/>
</dbReference>
<dbReference type="AGR" id="MGI:1924408"/>
<dbReference type="CTD" id="51004"/>
<dbReference type="MGI" id="MGI:1924408">
    <property type="gene designation" value="Coq6"/>
</dbReference>
<dbReference type="VEuPathDB" id="HostDB:ENSMUSG00000021235"/>
<dbReference type="eggNOG" id="KOG3855">
    <property type="taxonomic scope" value="Eukaryota"/>
</dbReference>
<dbReference type="GeneTree" id="ENSGT00390000015152"/>
<dbReference type="HOGENOM" id="CLU_009665_8_0_1"/>
<dbReference type="InParanoid" id="Q8R1S0"/>
<dbReference type="OMA" id="VKQMQVW"/>
<dbReference type="OrthoDB" id="683240at2759"/>
<dbReference type="PhylomeDB" id="Q8R1S0"/>
<dbReference type="TreeFam" id="TF105772"/>
<dbReference type="Reactome" id="R-MMU-2142789">
    <property type="pathway name" value="Ubiquinol biosynthesis"/>
</dbReference>
<dbReference type="UniPathway" id="UPA00232"/>
<dbReference type="BioGRID-ORCS" id="217707">
    <property type="hits" value="17 hits in 77 CRISPR screens"/>
</dbReference>
<dbReference type="ChiTaRS" id="Coq6">
    <property type="organism name" value="mouse"/>
</dbReference>
<dbReference type="PRO" id="PR:Q8R1S0"/>
<dbReference type="Proteomes" id="UP000000589">
    <property type="component" value="Chromosome 12"/>
</dbReference>
<dbReference type="RNAct" id="Q8R1S0">
    <property type="molecule type" value="protein"/>
</dbReference>
<dbReference type="Bgee" id="ENSMUSG00000021235">
    <property type="expression patterns" value="Expressed in interventricular septum and 256 other cell types or tissues"/>
</dbReference>
<dbReference type="ExpressionAtlas" id="Q8R1S0">
    <property type="expression patterns" value="baseline and differential"/>
</dbReference>
<dbReference type="GO" id="GO:0042995">
    <property type="term" value="C:cell projection"/>
    <property type="evidence" value="ECO:0007669"/>
    <property type="project" value="UniProtKB-SubCell"/>
</dbReference>
<dbReference type="GO" id="GO:0031314">
    <property type="term" value="C:extrinsic component of mitochondrial inner membrane"/>
    <property type="evidence" value="ECO:0000314"/>
    <property type="project" value="MGI"/>
</dbReference>
<dbReference type="GO" id="GO:0005794">
    <property type="term" value="C:Golgi apparatus"/>
    <property type="evidence" value="ECO:0007669"/>
    <property type="project" value="UniProtKB-SubCell"/>
</dbReference>
<dbReference type="GO" id="GO:0005743">
    <property type="term" value="C:mitochondrial inner membrane"/>
    <property type="evidence" value="ECO:0000266"/>
    <property type="project" value="ComplexPortal"/>
</dbReference>
<dbReference type="GO" id="GO:0005739">
    <property type="term" value="C:mitochondrion"/>
    <property type="evidence" value="ECO:0007005"/>
    <property type="project" value="MGI"/>
</dbReference>
<dbReference type="GO" id="GO:0110142">
    <property type="term" value="C:ubiquinone biosynthesis complex"/>
    <property type="evidence" value="ECO:0007669"/>
    <property type="project" value="Ensembl"/>
</dbReference>
<dbReference type="GO" id="GO:0120538">
    <property type="term" value="F:2-methoxy-6-polyprenolphenol 4-hydroxylase activity"/>
    <property type="evidence" value="ECO:0000250"/>
    <property type="project" value="UniProtKB"/>
</dbReference>
<dbReference type="GO" id="GO:0106364">
    <property type="term" value="F:4-hydroxy-3-all-trans-polyprenylbenzoate oxygenase activity"/>
    <property type="evidence" value="ECO:0000250"/>
    <property type="project" value="UniProtKB"/>
</dbReference>
<dbReference type="GO" id="GO:0071949">
    <property type="term" value="F:FAD binding"/>
    <property type="evidence" value="ECO:0007669"/>
    <property type="project" value="InterPro"/>
</dbReference>
<dbReference type="GO" id="GO:0016709">
    <property type="term" value="F:oxidoreductase activity, acting on paired donors, with incorporation or reduction of molecular oxygen, NAD(P)H as one donor, and incorporation of one atom of oxygen"/>
    <property type="evidence" value="ECO:0000315"/>
    <property type="project" value="MGI"/>
</dbReference>
<dbReference type="GO" id="GO:0016712">
    <property type="term" value="F:oxidoreductase activity, acting on paired donors, with incorporation or reduction of molecular oxygen, reduced flavin or flavoprotein as one donor, and incorporation of one atom of oxygen"/>
    <property type="evidence" value="ECO:0007669"/>
    <property type="project" value="UniProtKB-UniRule"/>
</dbReference>
<dbReference type="GO" id="GO:0006744">
    <property type="term" value="P:ubiquinone biosynthetic process"/>
    <property type="evidence" value="ECO:0000315"/>
    <property type="project" value="MGI"/>
</dbReference>
<dbReference type="FunFam" id="3.30.9.10:FF:000111">
    <property type="entry name" value="Ubiquinone biosynthesis monooxygenase COQ6, mitochondrial"/>
    <property type="match status" value="1"/>
</dbReference>
<dbReference type="FunFam" id="3.50.50.60:FF:000066">
    <property type="entry name" value="Ubiquinone biosynthesis monooxygenase COQ6, mitochondrial"/>
    <property type="match status" value="1"/>
</dbReference>
<dbReference type="FunFam" id="3.50.50.60:FF:000086">
    <property type="entry name" value="Ubiquinone biosynthesis monooxygenase COQ6, mitochondrial"/>
    <property type="match status" value="1"/>
</dbReference>
<dbReference type="Gene3D" id="3.50.50.60">
    <property type="entry name" value="FAD/NAD(P)-binding domain"/>
    <property type="match status" value="2"/>
</dbReference>
<dbReference type="HAMAP" id="MF_03193">
    <property type="entry name" value="COQ6_monooxygenase"/>
    <property type="match status" value="1"/>
</dbReference>
<dbReference type="InterPro" id="IPR002938">
    <property type="entry name" value="FAD-bd"/>
</dbReference>
<dbReference type="InterPro" id="IPR036188">
    <property type="entry name" value="FAD/NAD-bd_sf"/>
</dbReference>
<dbReference type="InterPro" id="IPR018168">
    <property type="entry name" value="Ubi_Hdrlase_CS"/>
</dbReference>
<dbReference type="InterPro" id="IPR010971">
    <property type="entry name" value="UbiH/COQ6"/>
</dbReference>
<dbReference type="InterPro" id="IPR051205">
    <property type="entry name" value="UbiH/COQ6_monooxygenase"/>
</dbReference>
<dbReference type="InterPro" id="IPR000689">
    <property type="entry name" value="UbQ_mOase_COQ6"/>
</dbReference>
<dbReference type="NCBIfam" id="TIGR01989">
    <property type="entry name" value="COQ6"/>
    <property type="match status" value="1"/>
</dbReference>
<dbReference type="NCBIfam" id="TIGR01988">
    <property type="entry name" value="Ubi-OHases"/>
    <property type="match status" value="1"/>
</dbReference>
<dbReference type="PANTHER" id="PTHR43876">
    <property type="entry name" value="UBIQUINONE BIOSYNTHESIS MONOOXYGENASE COQ6, MITOCHONDRIAL"/>
    <property type="match status" value="1"/>
</dbReference>
<dbReference type="PANTHER" id="PTHR43876:SF7">
    <property type="entry name" value="UBIQUINONE BIOSYNTHESIS MONOOXYGENASE COQ6, MITOCHONDRIAL"/>
    <property type="match status" value="1"/>
</dbReference>
<dbReference type="Pfam" id="PF01494">
    <property type="entry name" value="FAD_binding_3"/>
    <property type="match status" value="2"/>
</dbReference>
<dbReference type="PRINTS" id="PR00420">
    <property type="entry name" value="RNGMNOXGNASE"/>
</dbReference>
<dbReference type="SUPFAM" id="SSF51905">
    <property type="entry name" value="FAD/NAD(P)-binding domain"/>
    <property type="match status" value="1"/>
</dbReference>
<dbReference type="PROSITE" id="PS01304">
    <property type="entry name" value="UBIH"/>
    <property type="match status" value="1"/>
</dbReference>
<keyword id="KW-0966">Cell projection</keyword>
<keyword id="KW-0274">FAD</keyword>
<keyword id="KW-0285">Flavoprotein</keyword>
<keyword id="KW-0333">Golgi apparatus</keyword>
<keyword id="KW-0472">Membrane</keyword>
<keyword id="KW-0496">Mitochondrion</keyword>
<keyword id="KW-0999">Mitochondrion inner membrane</keyword>
<keyword id="KW-0503">Monooxygenase</keyword>
<keyword id="KW-0560">Oxidoreductase</keyword>
<keyword id="KW-1185">Reference proteome</keyword>
<keyword id="KW-0809">Transit peptide</keyword>
<keyword id="KW-0831">Ubiquinone biosynthesis</keyword>
<organism>
    <name type="scientific">Mus musculus</name>
    <name type="common">Mouse</name>
    <dbReference type="NCBI Taxonomy" id="10090"/>
    <lineage>
        <taxon>Eukaryota</taxon>
        <taxon>Metazoa</taxon>
        <taxon>Chordata</taxon>
        <taxon>Craniata</taxon>
        <taxon>Vertebrata</taxon>
        <taxon>Euteleostomi</taxon>
        <taxon>Mammalia</taxon>
        <taxon>Eutheria</taxon>
        <taxon>Euarchontoglires</taxon>
        <taxon>Glires</taxon>
        <taxon>Rodentia</taxon>
        <taxon>Myomorpha</taxon>
        <taxon>Muroidea</taxon>
        <taxon>Muridae</taxon>
        <taxon>Murinae</taxon>
        <taxon>Mus</taxon>
        <taxon>Mus</taxon>
    </lineage>
</organism>
<feature type="transit peptide" description="Mitochondrion" evidence="1">
    <location>
        <begin position="1"/>
        <end position="35"/>
    </location>
</feature>
<feature type="chain" id="PRO_0000207584" description="Ubiquinone biosynthesis monooxygenase COQ6, mitochondrial">
    <location>
        <begin position="36"/>
        <end position="476"/>
    </location>
</feature>
<feature type="modified residue" description="N6-succinyllysine" evidence="4">
    <location>
        <position position="219"/>
    </location>
</feature>
<feature type="sequence conflict" description="In Ref. 4; AAH51055." evidence="3" ref="4">
    <original>Q</original>
    <variation>R</variation>
    <location>
        <position position="33"/>
    </location>
</feature>
<feature type="sequence conflict" description="In Ref. 1; BAC37039." evidence="3" ref="1">
    <original>L</original>
    <variation>I</variation>
    <location>
        <position position="441"/>
    </location>
</feature>
<proteinExistence type="evidence at protein level"/>
<sequence>MAARIGSMAGLLCVRWWSSAQLAARGGPLVASQRWAGSSADTVYDVVVSGGGLVGSAMACALGHDIHFHDKKILLLEAGPKKALEKLSETYSNRVSSISPGSTTLLSSFGAWDHICNMRCKAFRRMQVWDSCSEALIMFDRDNLDDMGYIVENDVIMYALTKQLEAVADRVKVLYESKAVGYSWPGAFSMADSSPWVHITLGDGSTLQTKLLIGADGHKSGVRQAAGIQNVSWKYDQSAVVATLHLSEATENNVAWQRFLPSGPIALLPLSDTLSSLVWSTSHEHAAELVSMDEEEFVDAINSAFWSDVHHTDFVDSASAMVRHAVALLKPTKVSARQLPPSIAKVDAKSRALFPLGLGHAAEYVRPRVALIGDAAHRIHPLAGQGVNMGFGDISSLVHHLSTAAFNGKDLGSMSHLTGYETDRQRHNTALLAATDLLKRLYSTSATPLVLLRTWGLQATNAVSPLKEQIMAFASK</sequence>
<reference key="1">
    <citation type="journal article" date="2005" name="Science">
        <title>The transcriptional landscape of the mammalian genome.</title>
        <authorList>
            <person name="Carninci P."/>
            <person name="Kasukawa T."/>
            <person name="Katayama S."/>
            <person name="Gough J."/>
            <person name="Frith M.C."/>
            <person name="Maeda N."/>
            <person name="Oyama R."/>
            <person name="Ravasi T."/>
            <person name="Lenhard B."/>
            <person name="Wells C."/>
            <person name="Kodzius R."/>
            <person name="Shimokawa K."/>
            <person name="Bajic V.B."/>
            <person name="Brenner S.E."/>
            <person name="Batalov S."/>
            <person name="Forrest A.R."/>
            <person name="Zavolan M."/>
            <person name="Davis M.J."/>
            <person name="Wilming L.G."/>
            <person name="Aidinis V."/>
            <person name="Allen J.E."/>
            <person name="Ambesi-Impiombato A."/>
            <person name="Apweiler R."/>
            <person name="Aturaliya R.N."/>
            <person name="Bailey T.L."/>
            <person name="Bansal M."/>
            <person name="Baxter L."/>
            <person name="Beisel K.W."/>
            <person name="Bersano T."/>
            <person name="Bono H."/>
            <person name="Chalk A.M."/>
            <person name="Chiu K.P."/>
            <person name="Choudhary V."/>
            <person name="Christoffels A."/>
            <person name="Clutterbuck D.R."/>
            <person name="Crowe M.L."/>
            <person name="Dalla E."/>
            <person name="Dalrymple B.P."/>
            <person name="de Bono B."/>
            <person name="Della Gatta G."/>
            <person name="di Bernardo D."/>
            <person name="Down T."/>
            <person name="Engstrom P."/>
            <person name="Fagiolini M."/>
            <person name="Faulkner G."/>
            <person name="Fletcher C.F."/>
            <person name="Fukushima T."/>
            <person name="Furuno M."/>
            <person name="Futaki S."/>
            <person name="Gariboldi M."/>
            <person name="Georgii-Hemming P."/>
            <person name="Gingeras T.R."/>
            <person name="Gojobori T."/>
            <person name="Green R.E."/>
            <person name="Gustincich S."/>
            <person name="Harbers M."/>
            <person name="Hayashi Y."/>
            <person name="Hensch T.K."/>
            <person name="Hirokawa N."/>
            <person name="Hill D."/>
            <person name="Huminiecki L."/>
            <person name="Iacono M."/>
            <person name="Ikeo K."/>
            <person name="Iwama A."/>
            <person name="Ishikawa T."/>
            <person name="Jakt M."/>
            <person name="Kanapin A."/>
            <person name="Katoh M."/>
            <person name="Kawasawa Y."/>
            <person name="Kelso J."/>
            <person name="Kitamura H."/>
            <person name="Kitano H."/>
            <person name="Kollias G."/>
            <person name="Krishnan S.P."/>
            <person name="Kruger A."/>
            <person name="Kummerfeld S.K."/>
            <person name="Kurochkin I.V."/>
            <person name="Lareau L.F."/>
            <person name="Lazarevic D."/>
            <person name="Lipovich L."/>
            <person name="Liu J."/>
            <person name="Liuni S."/>
            <person name="McWilliam S."/>
            <person name="Madan Babu M."/>
            <person name="Madera M."/>
            <person name="Marchionni L."/>
            <person name="Matsuda H."/>
            <person name="Matsuzawa S."/>
            <person name="Miki H."/>
            <person name="Mignone F."/>
            <person name="Miyake S."/>
            <person name="Morris K."/>
            <person name="Mottagui-Tabar S."/>
            <person name="Mulder N."/>
            <person name="Nakano N."/>
            <person name="Nakauchi H."/>
            <person name="Ng P."/>
            <person name="Nilsson R."/>
            <person name="Nishiguchi S."/>
            <person name="Nishikawa S."/>
            <person name="Nori F."/>
            <person name="Ohara O."/>
            <person name="Okazaki Y."/>
            <person name="Orlando V."/>
            <person name="Pang K.C."/>
            <person name="Pavan W.J."/>
            <person name="Pavesi G."/>
            <person name="Pesole G."/>
            <person name="Petrovsky N."/>
            <person name="Piazza S."/>
            <person name="Reed J."/>
            <person name="Reid J.F."/>
            <person name="Ring B.Z."/>
            <person name="Ringwald M."/>
            <person name="Rost B."/>
            <person name="Ruan Y."/>
            <person name="Salzberg S.L."/>
            <person name="Sandelin A."/>
            <person name="Schneider C."/>
            <person name="Schoenbach C."/>
            <person name="Sekiguchi K."/>
            <person name="Semple C.A."/>
            <person name="Seno S."/>
            <person name="Sessa L."/>
            <person name="Sheng Y."/>
            <person name="Shibata Y."/>
            <person name="Shimada H."/>
            <person name="Shimada K."/>
            <person name="Silva D."/>
            <person name="Sinclair B."/>
            <person name="Sperling S."/>
            <person name="Stupka E."/>
            <person name="Sugiura K."/>
            <person name="Sultana R."/>
            <person name="Takenaka Y."/>
            <person name="Taki K."/>
            <person name="Tammoja K."/>
            <person name="Tan S.L."/>
            <person name="Tang S."/>
            <person name="Taylor M.S."/>
            <person name="Tegner J."/>
            <person name="Teichmann S.A."/>
            <person name="Ueda H.R."/>
            <person name="van Nimwegen E."/>
            <person name="Verardo R."/>
            <person name="Wei C.L."/>
            <person name="Yagi K."/>
            <person name="Yamanishi H."/>
            <person name="Zabarovsky E."/>
            <person name="Zhu S."/>
            <person name="Zimmer A."/>
            <person name="Hide W."/>
            <person name="Bult C."/>
            <person name="Grimmond S.M."/>
            <person name="Teasdale R.D."/>
            <person name="Liu E.T."/>
            <person name="Brusic V."/>
            <person name="Quackenbush J."/>
            <person name="Wahlestedt C."/>
            <person name="Mattick J.S."/>
            <person name="Hume D.A."/>
            <person name="Kai C."/>
            <person name="Sasaki D."/>
            <person name="Tomaru Y."/>
            <person name="Fukuda S."/>
            <person name="Kanamori-Katayama M."/>
            <person name="Suzuki M."/>
            <person name="Aoki J."/>
            <person name="Arakawa T."/>
            <person name="Iida J."/>
            <person name="Imamura K."/>
            <person name="Itoh M."/>
            <person name="Kato T."/>
            <person name="Kawaji H."/>
            <person name="Kawagashira N."/>
            <person name="Kawashima T."/>
            <person name="Kojima M."/>
            <person name="Kondo S."/>
            <person name="Konno H."/>
            <person name="Nakano K."/>
            <person name="Ninomiya N."/>
            <person name="Nishio T."/>
            <person name="Okada M."/>
            <person name="Plessy C."/>
            <person name="Shibata K."/>
            <person name="Shiraki T."/>
            <person name="Suzuki S."/>
            <person name="Tagami M."/>
            <person name="Waki K."/>
            <person name="Watahiki A."/>
            <person name="Okamura-Oho Y."/>
            <person name="Suzuki H."/>
            <person name="Kawai J."/>
            <person name="Hayashizaki Y."/>
        </authorList>
    </citation>
    <scope>NUCLEOTIDE SEQUENCE [LARGE SCALE MRNA]</scope>
    <source>
        <strain>C57BL/6J</strain>
        <tissue>Forelimb</tissue>
        <tissue>Placenta</tissue>
        <tissue>Stomach</tissue>
    </source>
</reference>
<reference key="2">
    <citation type="journal article" date="2009" name="PLoS Biol.">
        <title>Lineage-specific biology revealed by a finished genome assembly of the mouse.</title>
        <authorList>
            <person name="Church D.M."/>
            <person name="Goodstadt L."/>
            <person name="Hillier L.W."/>
            <person name="Zody M.C."/>
            <person name="Goldstein S."/>
            <person name="She X."/>
            <person name="Bult C.J."/>
            <person name="Agarwala R."/>
            <person name="Cherry J.L."/>
            <person name="DiCuccio M."/>
            <person name="Hlavina W."/>
            <person name="Kapustin Y."/>
            <person name="Meric P."/>
            <person name="Maglott D."/>
            <person name="Birtle Z."/>
            <person name="Marques A.C."/>
            <person name="Graves T."/>
            <person name="Zhou S."/>
            <person name="Teague B."/>
            <person name="Potamousis K."/>
            <person name="Churas C."/>
            <person name="Place M."/>
            <person name="Herschleb J."/>
            <person name="Runnheim R."/>
            <person name="Forrest D."/>
            <person name="Amos-Landgraf J."/>
            <person name="Schwartz D.C."/>
            <person name="Cheng Z."/>
            <person name="Lindblad-Toh K."/>
            <person name="Eichler E.E."/>
            <person name="Ponting C.P."/>
        </authorList>
    </citation>
    <scope>NUCLEOTIDE SEQUENCE [LARGE SCALE GENOMIC DNA]</scope>
    <source>
        <strain>C57BL/6J</strain>
    </source>
</reference>
<reference key="3">
    <citation type="submission" date="2005-07" db="EMBL/GenBank/DDBJ databases">
        <authorList>
            <person name="Mural R.J."/>
            <person name="Adams M.D."/>
            <person name="Myers E.W."/>
            <person name="Smith H.O."/>
            <person name="Venter J.C."/>
        </authorList>
    </citation>
    <scope>NUCLEOTIDE SEQUENCE [LARGE SCALE GENOMIC DNA]</scope>
</reference>
<reference key="4">
    <citation type="journal article" date="2004" name="Genome Res.">
        <title>The status, quality, and expansion of the NIH full-length cDNA project: the Mammalian Gene Collection (MGC).</title>
        <authorList>
            <consortium name="The MGC Project Team"/>
        </authorList>
    </citation>
    <scope>NUCLEOTIDE SEQUENCE [LARGE SCALE MRNA]</scope>
    <source>
        <strain>Czech II</strain>
        <strain>FVB/N</strain>
        <tissue>Brain</tissue>
        <tissue>Liver</tissue>
        <tissue>Mammary tumor</tissue>
    </source>
</reference>
<reference key="5">
    <citation type="journal article" date="2010" name="Cell">
        <title>A tissue-specific atlas of mouse protein phosphorylation and expression.</title>
        <authorList>
            <person name="Huttlin E.L."/>
            <person name="Jedrychowski M.P."/>
            <person name="Elias J.E."/>
            <person name="Goswami T."/>
            <person name="Rad R."/>
            <person name="Beausoleil S.A."/>
            <person name="Villen J."/>
            <person name="Haas W."/>
            <person name="Sowa M.E."/>
            <person name="Gygi S.P."/>
        </authorList>
    </citation>
    <scope>IDENTIFICATION BY MASS SPECTROMETRY [LARGE SCALE ANALYSIS]</scope>
    <source>
        <tissue>Brown adipose tissue</tissue>
        <tissue>Heart</tissue>
        <tissue>Kidney</tissue>
        <tissue>Liver</tissue>
    </source>
</reference>
<reference key="6">
    <citation type="journal article" date="2011" name="J. Clin. Invest.">
        <title>COQ6 mutations in human patients produce nephrotic syndrome with sensorineural deafness.</title>
        <authorList>
            <person name="Heeringa S.F."/>
            <person name="Chernin G."/>
            <person name="Chaki M."/>
            <person name="Zhou W."/>
            <person name="Sloan A.J."/>
            <person name="Ji Z."/>
            <person name="Xie L.X."/>
            <person name="Salviati L."/>
            <person name="Hurd T.W."/>
            <person name="Vega-Warner V."/>
            <person name="Killen P.D."/>
            <person name="Raphael Y."/>
            <person name="Ashraf S."/>
            <person name="Ovunc B."/>
            <person name="Schoeb D.S."/>
            <person name="McLaughlin H.M."/>
            <person name="Airik R."/>
            <person name="Vlangos C.N."/>
            <person name="Gbadegesin R."/>
            <person name="Hinkes B."/>
            <person name="Saisawat P."/>
            <person name="Trevisson E."/>
            <person name="Doimo M."/>
            <person name="Casarin A."/>
            <person name="Pertegato V."/>
            <person name="Giorgi G."/>
            <person name="Prokisch H."/>
            <person name="Rotig A."/>
            <person name="Nurnberg G."/>
            <person name="Becker C."/>
            <person name="Wang S."/>
            <person name="Ozaltin F."/>
            <person name="Topaloglu R."/>
            <person name="Bakkaloglu A."/>
            <person name="Bakkaloglu S.A."/>
            <person name="Muller D."/>
            <person name="Beissert A."/>
            <person name="Mir S."/>
            <person name="Berdeli A."/>
            <person name="Varpizen S."/>
            <person name="Zenker M."/>
            <person name="Matejas V."/>
            <person name="Santos-Ocana C."/>
            <person name="Navas P."/>
            <person name="Kusakabe T."/>
            <person name="Kispert A."/>
            <person name="Akman S."/>
            <person name="Soliman N.A."/>
            <person name="Krick S."/>
            <person name="Mundel P."/>
            <person name="Reiser J."/>
            <person name="Nurnberg P."/>
            <person name="Clarke C.F."/>
            <person name="Wiggins R.C."/>
            <person name="Faul C."/>
            <person name="Hildebrandt F."/>
        </authorList>
    </citation>
    <scope>SUBCELLULAR LOCATION</scope>
    <scope>TISSUE SPECIFICITY</scope>
    <scope>DEVELOPMENTAL STAGE</scope>
</reference>
<reference key="7">
    <citation type="journal article" date="2013" name="Mol. Cell">
        <title>SIRT5-mediated lysine desuccinylation impacts diverse metabolic pathways.</title>
        <authorList>
            <person name="Park J."/>
            <person name="Chen Y."/>
            <person name="Tishkoff D.X."/>
            <person name="Peng C."/>
            <person name="Tan M."/>
            <person name="Dai L."/>
            <person name="Xie Z."/>
            <person name="Zhang Y."/>
            <person name="Zwaans B.M."/>
            <person name="Skinner M.E."/>
            <person name="Lombard D.B."/>
            <person name="Zhao Y."/>
        </authorList>
    </citation>
    <scope>SUCCINYLATION [LARGE SCALE ANALYSIS] AT LYS-219</scope>
    <scope>IDENTIFICATION BY MASS SPECTROMETRY [LARGE SCALE ANALYSIS]</scope>
    <source>
        <tissue>Embryonic fibroblast</tissue>
    </source>
</reference>
<name>COQ6_MOUSE</name>
<protein>
    <recommendedName>
        <fullName evidence="1">Ubiquinone biosynthesis monooxygenase COQ6, mitochondrial</fullName>
        <ecNumber evidence="1">1.14.15.45</ecNumber>
    </recommendedName>
    <alternativeName>
        <fullName evidence="1">2-methoxy-6-polyprenolphenol 4-hydroxylase</fullName>
        <ecNumber evidence="1">1.14.15.46</ecNumber>
    </alternativeName>
    <alternativeName>
        <fullName evidence="1">Coenzyme Q10 monooxygenase 6</fullName>
    </alternativeName>
</protein>
<comment type="function">
    <text evidence="1">FAD-dependent monooxygenase required for two non-consecutive steps during ubiquinone biosynthesis. Required for the C5-ring hydroxylation during ubiquinone biosynthesis by catalyzing the hydroxylation of 4-hydroxy-3-(all-trans-decaprenyl)benzoic acid to 3,4-dihydroxy-5-(all-trans-decaprenyl)benzoic acid. Also acts downstream of COQ4, for the C1-hydroxylation during ubiquinone biosynthesis by catalyzing the hydroxylation of 2-methoxy-6-(all-trans-decaprenyl)phenol to 2-methoxy-6-(all-trans-decaprenyl)benzene-1,4-diol. The electrons required for the hydroxylation reaction are funneled indirectly to COQ6 from NADPH via a ferredoxin/ferredoxin reductase system composed of FDX2 and FDXR.</text>
</comment>
<comment type="catalytic activity">
    <reaction evidence="1">
        <text>4-hydroxy-3-(all-trans-decaprenyl)benzoate + 2 reduced [2Fe-2S]-[ferredoxin] + O2 + 2 H(+) = 3,4-dihydroxy-5-(all-trans-decaprenyl)benzoate + 2 oxidized [2Fe-2S]-[ferredoxin] + H2O</text>
        <dbReference type="Rhea" id="RHEA:81259"/>
        <dbReference type="Rhea" id="RHEA-COMP:10000"/>
        <dbReference type="Rhea" id="RHEA-COMP:10001"/>
        <dbReference type="ChEBI" id="CHEBI:15377"/>
        <dbReference type="ChEBI" id="CHEBI:15378"/>
        <dbReference type="ChEBI" id="CHEBI:15379"/>
        <dbReference type="ChEBI" id="CHEBI:33737"/>
        <dbReference type="ChEBI" id="CHEBI:33738"/>
        <dbReference type="ChEBI" id="CHEBI:62793"/>
        <dbReference type="ChEBI" id="CHEBI:84503"/>
        <dbReference type="EC" id="1.14.15.45"/>
    </reaction>
</comment>
<comment type="catalytic activity">
    <reaction evidence="1">
        <text>2-methoxy-6-(all-trans-decaprenyl)phenol + 2 reduced [2Fe-2S]-[ferredoxin] + O2 + 2 H(+) = 2-methoxy-6-(all-trans-decaprenyl)benzene-1,4-diol + 2 oxidized [2Fe-2S]-[ferredoxin] + H2O</text>
        <dbReference type="Rhea" id="RHEA:81295"/>
        <dbReference type="Rhea" id="RHEA-COMP:10000"/>
        <dbReference type="Rhea" id="RHEA-COMP:10001"/>
        <dbReference type="ChEBI" id="CHEBI:15377"/>
        <dbReference type="ChEBI" id="CHEBI:15378"/>
        <dbReference type="ChEBI" id="CHEBI:15379"/>
        <dbReference type="ChEBI" id="CHEBI:33737"/>
        <dbReference type="ChEBI" id="CHEBI:33738"/>
        <dbReference type="ChEBI" id="CHEBI:50774"/>
        <dbReference type="ChEBI" id="CHEBI:64180"/>
        <dbReference type="EC" id="1.14.15.46"/>
    </reaction>
</comment>
<comment type="cofactor">
    <cofactor evidence="1">
        <name>FAD</name>
        <dbReference type="ChEBI" id="CHEBI:57692"/>
    </cofactor>
</comment>
<comment type="pathway">
    <text evidence="1">Cofactor biosynthesis; ubiquinone biosynthesis.</text>
</comment>
<comment type="subunit">
    <text evidence="1">Component of a multi-subunit COQ enzyme complex, composed of at least COQ3, COQ4, COQ5, COQ6, COQ7 and COQ9. Interacts with COQ8B and COQ7.</text>
</comment>
<comment type="subcellular location">
    <subcellularLocation>
        <location evidence="1">Mitochondrion inner membrane</location>
        <topology evidence="1">Peripheral membrane protein</topology>
        <orientation evidence="1">Matrix side</orientation>
    </subcellularLocation>
    <subcellularLocation>
        <location evidence="1 2">Golgi apparatus</location>
    </subcellularLocation>
    <subcellularLocation>
        <location evidence="1">Cell projection</location>
    </subcellularLocation>
    <text evidence="1">Localizes to cell processes and Golgi apparatus in podocytes.</text>
</comment>
<comment type="tissue specificity">
    <text evidence="2">Expressed in the kidney, in podocytes.</text>
</comment>
<comment type="developmental stage">
    <text evidence="2">At 12.5 dpc, expressed in the metanephric mesenchyme. At 16.5 dpc, expressed in the condensing metanephric mesenchyme surrounding the ureter tips. At 18.5 dpc, expressed in whole kidney.</text>
</comment>
<comment type="similarity">
    <text evidence="1">Belongs to the UbiH/COQ6 family.</text>
</comment>